<reference key="1">
    <citation type="submission" date="2006-08" db="EMBL/GenBank/DDBJ databases">
        <title>Complete sequence of Shewanella sp. MR-4.</title>
        <authorList>
            <consortium name="US DOE Joint Genome Institute"/>
            <person name="Copeland A."/>
            <person name="Lucas S."/>
            <person name="Lapidus A."/>
            <person name="Barry K."/>
            <person name="Detter J.C."/>
            <person name="Glavina del Rio T."/>
            <person name="Hammon N."/>
            <person name="Israni S."/>
            <person name="Dalin E."/>
            <person name="Tice H."/>
            <person name="Pitluck S."/>
            <person name="Kiss H."/>
            <person name="Brettin T."/>
            <person name="Bruce D."/>
            <person name="Han C."/>
            <person name="Tapia R."/>
            <person name="Gilna P."/>
            <person name="Schmutz J."/>
            <person name="Larimer F."/>
            <person name="Land M."/>
            <person name="Hauser L."/>
            <person name="Kyrpides N."/>
            <person name="Mikhailova N."/>
            <person name="Nealson K."/>
            <person name="Konstantinidis K."/>
            <person name="Klappenbach J."/>
            <person name="Tiedje J."/>
            <person name="Richardson P."/>
        </authorList>
    </citation>
    <scope>NUCLEOTIDE SEQUENCE [LARGE SCALE GENOMIC DNA]</scope>
    <source>
        <strain>MR-4</strain>
    </source>
</reference>
<evidence type="ECO:0000255" key="1">
    <source>
        <dbReference type="HAMAP-Rule" id="MF_01862"/>
    </source>
</evidence>
<evidence type="ECO:0000305" key="2"/>
<keyword id="KW-0963">Cytoplasm</keyword>
<keyword id="KW-0489">Methyltransferase</keyword>
<keyword id="KW-0698">rRNA processing</keyword>
<keyword id="KW-0949">S-adenosyl-L-methionine</keyword>
<keyword id="KW-0808">Transferase</keyword>
<dbReference type="EC" id="2.1.1.172" evidence="1"/>
<dbReference type="EMBL" id="CP000446">
    <property type="protein sequence ID" value="ABI37767.1"/>
    <property type="status" value="ALT_INIT"/>
    <property type="molecule type" value="Genomic_DNA"/>
</dbReference>
<dbReference type="RefSeq" id="WP_041408961.1">
    <property type="nucleotide sequence ID" value="NC_008321.1"/>
</dbReference>
<dbReference type="SMR" id="Q0HMF0"/>
<dbReference type="GeneID" id="94729367"/>
<dbReference type="KEGG" id="she:Shewmr4_0687"/>
<dbReference type="HOGENOM" id="CLU_049581_0_1_6"/>
<dbReference type="GO" id="GO:0005737">
    <property type="term" value="C:cytoplasm"/>
    <property type="evidence" value="ECO:0007669"/>
    <property type="project" value="UniProtKB-SubCell"/>
</dbReference>
<dbReference type="GO" id="GO:0052914">
    <property type="term" value="F:16S rRNA (guanine(1207)-N(2))-methyltransferase activity"/>
    <property type="evidence" value="ECO:0007669"/>
    <property type="project" value="UniProtKB-EC"/>
</dbReference>
<dbReference type="GO" id="GO:0003676">
    <property type="term" value="F:nucleic acid binding"/>
    <property type="evidence" value="ECO:0007669"/>
    <property type="project" value="InterPro"/>
</dbReference>
<dbReference type="CDD" id="cd02440">
    <property type="entry name" value="AdoMet_MTases"/>
    <property type="match status" value="1"/>
</dbReference>
<dbReference type="Gene3D" id="3.40.50.150">
    <property type="entry name" value="Vaccinia Virus protein VP39"/>
    <property type="match status" value="2"/>
</dbReference>
<dbReference type="HAMAP" id="MF_01862">
    <property type="entry name" value="16SrRNA_methyltr_C"/>
    <property type="match status" value="1"/>
</dbReference>
<dbReference type="InterPro" id="IPR002052">
    <property type="entry name" value="DNA_methylase_N6_adenine_CS"/>
</dbReference>
<dbReference type="InterPro" id="IPR013675">
    <property type="entry name" value="Mtase_sm_N"/>
</dbReference>
<dbReference type="InterPro" id="IPR023543">
    <property type="entry name" value="rRNA_ssu_MeTfrase_C"/>
</dbReference>
<dbReference type="InterPro" id="IPR046977">
    <property type="entry name" value="RsmC/RlmG"/>
</dbReference>
<dbReference type="InterPro" id="IPR029063">
    <property type="entry name" value="SAM-dependent_MTases_sf"/>
</dbReference>
<dbReference type="InterPro" id="IPR007848">
    <property type="entry name" value="Small_mtfrase_dom"/>
</dbReference>
<dbReference type="PANTHER" id="PTHR47816">
    <property type="entry name" value="RIBOSOMAL RNA SMALL SUBUNIT METHYLTRANSFERASE C"/>
    <property type="match status" value="1"/>
</dbReference>
<dbReference type="PANTHER" id="PTHR47816:SF4">
    <property type="entry name" value="RIBOSOMAL RNA SMALL SUBUNIT METHYLTRANSFERASE C"/>
    <property type="match status" value="1"/>
</dbReference>
<dbReference type="Pfam" id="PF05175">
    <property type="entry name" value="MTS"/>
    <property type="match status" value="1"/>
</dbReference>
<dbReference type="Pfam" id="PF08468">
    <property type="entry name" value="MTS_N"/>
    <property type="match status" value="1"/>
</dbReference>
<dbReference type="SUPFAM" id="SSF53335">
    <property type="entry name" value="S-adenosyl-L-methionine-dependent methyltransferases"/>
    <property type="match status" value="1"/>
</dbReference>
<protein>
    <recommendedName>
        <fullName evidence="1">Ribosomal RNA small subunit methyltransferase C</fullName>
        <ecNumber evidence="1">2.1.1.172</ecNumber>
    </recommendedName>
    <alternativeName>
        <fullName evidence="1">16S rRNA m2G1207 methyltransferase</fullName>
    </alternativeName>
    <alternativeName>
        <fullName evidence="1">rRNA (guanine-N(2)-)-methyltransferase RsmC</fullName>
    </alternativeName>
</protein>
<name>RSMC_SHESM</name>
<accession>Q0HMF0</accession>
<organism>
    <name type="scientific">Shewanella sp. (strain MR-4)</name>
    <dbReference type="NCBI Taxonomy" id="60480"/>
    <lineage>
        <taxon>Bacteria</taxon>
        <taxon>Pseudomonadati</taxon>
        <taxon>Pseudomonadota</taxon>
        <taxon>Gammaproteobacteria</taxon>
        <taxon>Alteromonadales</taxon>
        <taxon>Shewanellaceae</taxon>
        <taxon>Shewanella</taxon>
    </lineage>
</organism>
<feature type="chain" id="PRO_0000369780" description="Ribosomal RNA small subunit methyltransferase C">
    <location>
        <begin position="1"/>
        <end position="342"/>
    </location>
</feature>
<gene>
    <name evidence="1" type="primary">rsmC</name>
    <name type="ordered locus">Shewmr4_0687</name>
</gene>
<proteinExistence type="inferred from homology"/>
<comment type="function">
    <text evidence="1">Specifically methylates the guanine in position 1207 of 16S rRNA in the 30S particle.</text>
</comment>
<comment type="catalytic activity">
    <reaction evidence="1">
        <text>guanosine(1207) in 16S rRNA + S-adenosyl-L-methionine = N(2)-methylguanosine(1207) in 16S rRNA + S-adenosyl-L-homocysteine + H(+)</text>
        <dbReference type="Rhea" id="RHEA:42736"/>
        <dbReference type="Rhea" id="RHEA-COMP:10213"/>
        <dbReference type="Rhea" id="RHEA-COMP:10214"/>
        <dbReference type="ChEBI" id="CHEBI:15378"/>
        <dbReference type="ChEBI" id="CHEBI:57856"/>
        <dbReference type="ChEBI" id="CHEBI:59789"/>
        <dbReference type="ChEBI" id="CHEBI:74269"/>
        <dbReference type="ChEBI" id="CHEBI:74481"/>
        <dbReference type="EC" id="2.1.1.172"/>
    </reaction>
</comment>
<comment type="subunit">
    <text evidence="1">Monomer.</text>
</comment>
<comment type="subcellular location">
    <subcellularLocation>
        <location evidence="1">Cytoplasm</location>
    </subcellularLocation>
</comment>
<comment type="similarity">
    <text evidence="1">Belongs to the methyltransferase superfamily. RsmC family.</text>
</comment>
<comment type="sequence caution" evidence="2">
    <conflict type="erroneous initiation">
        <sequence resource="EMBL-CDS" id="ABI37767"/>
    </conflict>
</comment>
<sequence>MLTNPSQVIIRNQETLSQHKVLVLNHEADSLPKALLDVAQSVDALALDYHHYLHLAPQANAKLRCYFGHQLPHQDKYDTVIVYFPKAKPLAPYLFNLAAQHLVADGQLLVVGENKGGVKSLVKLLPKYFATGVKLDNARHCLLFGSSLIDTAPEIKLSDWTSQYQLATPQGNITICNLVGVFSEKHLDQGTELLLSHLPTLSGRVLDFGCGAGVIAAALLKAQPTLSLECIDINAMALASCELTLAANGMTAKVYPSDGLAQTSGKFDGIISNPPFHDGLASTTSIAQSFVADSAKQLQSKGIWQIVANRHLPYSDTIAAEFGQLTVPAENNKYKLYSFQQA</sequence>